<protein>
    <recommendedName>
        <fullName evidence="5">Metallo-beta-lactamase type 2</fullName>
        <ecNumber evidence="2">3.5.2.6</ecNumber>
    </recommendedName>
    <alternativeName>
        <fullName evidence="5">B2 metallo-beta-lactamase</fullName>
    </alternativeName>
    <alternativeName>
        <fullName evidence="4">Beta-lactamase II</fullName>
    </alternativeName>
    <alternativeName>
        <fullName evidence="1">Cephalosporinase</fullName>
    </alternativeName>
    <alternativeName>
        <fullName evidence="4">Metallo-beta-lactamase type II</fullName>
    </alternativeName>
    <alternativeName>
        <fullName evidence="1">Metallothioprotein beta-lactamase II</fullName>
    </alternativeName>
    <alternativeName>
        <fullName evidence="4">Penicillinase</fullName>
    </alternativeName>
    <alternativeName>
        <fullName evidence="1">Zinc-requiring beta-lactamase II</fullName>
    </alternativeName>
</protein>
<dbReference type="EC" id="3.5.2.6" evidence="2"/>
<dbReference type="EMBL" id="M15350">
    <property type="protein sequence ID" value="AAA22275.1"/>
    <property type="molecule type" value="Genomic_DNA"/>
</dbReference>
<dbReference type="SMR" id="P10425"/>
<dbReference type="GO" id="GO:0042597">
    <property type="term" value="C:periplasmic space"/>
    <property type="evidence" value="ECO:0007669"/>
    <property type="project" value="UniProtKB-SubCell"/>
</dbReference>
<dbReference type="GO" id="GO:0008800">
    <property type="term" value="F:beta-lactamase activity"/>
    <property type="evidence" value="ECO:0000250"/>
    <property type="project" value="UniProtKB"/>
</dbReference>
<dbReference type="GO" id="GO:0008270">
    <property type="term" value="F:zinc ion binding"/>
    <property type="evidence" value="ECO:0000250"/>
    <property type="project" value="UniProtKB"/>
</dbReference>
<dbReference type="GO" id="GO:0017001">
    <property type="term" value="P:antibiotic catabolic process"/>
    <property type="evidence" value="ECO:0000250"/>
    <property type="project" value="UniProtKB"/>
</dbReference>
<dbReference type="GO" id="GO:0046677">
    <property type="term" value="P:response to antibiotic"/>
    <property type="evidence" value="ECO:0007669"/>
    <property type="project" value="UniProtKB-KW"/>
</dbReference>
<dbReference type="CDD" id="cd16304">
    <property type="entry name" value="BcII-like_MBL-B1"/>
    <property type="match status" value="1"/>
</dbReference>
<dbReference type="FunFam" id="3.60.15.10:FF:000050">
    <property type="entry name" value="Metallo-beta-lactamase type 2"/>
    <property type="match status" value="1"/>
</dbReference>
<dbReference type="Gene3D" id="3.60.15.10">
    <property type="entry name" value="Ribonuclease Z/Hydroxyacylglutathione hydrolase-like"/>
    <property type="match status" value="1"/>
</dbReference>
<dbReference type="InterPro" id="IPR047917">
    <property type="entry name" value="BcII-like_MBL-B1"/>
</dbReference>
<dbReference type="InterPro" id="IPR001018">
    <property type="entry name" value="Beta-lactamase_class-B_CS"/>
</dbReference>
<dbReference type="InterPro" id="IPR001279">
    <property type="entry name" value="Metallo-B-lactamas"/>
</dbReference>
<dbReference type="InterPro" id="IPR050855">
    <property type="entry name" value="NDM-1-like"/>
</dbReference>
<dbReference type="InterPro" id="IPR036866">
    <property type="entry name" value="RibonucZ/Hydroxyglut_hydro"/>
</dbReference>
<dbReference type="NCBIfam" id="NF033095">
    <property type="entry name" value="bla_Bc_2"/>
    <property type="match status" value="1"/>
</dbReference>
<dbReference type="NCBIfam" id="NF012229">
    <property type="entry name" value="bla_class_B_core"/>
    <property type="match status" value="1"/>
</dbReference>
<dbReference type="NCBIfam" id="NF033088">
    <property type="entry name" value="bla_subclass_B1"/>
    <property type="match status" value="1"/>
</dbReference>
<dbReference type="PANTHER" id="PTHR42951:SF4">
    <property type="entry name" value="ACYL-COENZYME A THIOESTERASE MBLAC2"/>
    <property type="match status" value="1"/>
</dbReference>
<dbReference type="PANTHER" id="PTHR42951">
    <property type="entry name" value="METALLO-BETA-LACTAMASE DOMAIN-CONTAINING"/>
    <property type="match status" value="1"/>
</dbReference>
<dbReference type="Pfam" id="PF00753">
    <property type="entry name" value="Lactamase_B"/>
    <property type="match status" value="1"/>
</dbReference>
<dbReference type="SMART" id="SM00849">
    <property type="entry name" value="Lactamase_B"/>
    <property type="match status" value="1"/>
</dbReference>
<dbReference type="SUPFAM" id="SSF56281">
    <property type="entry name" value="Metallo-hydrolase/oxidoreductase"/>
    <property type="match status" value="1"/>
</dbReference>
<dbReference type="PROSITE" id="PS00743">
    <property type="entry name" value="BETA_LACTAMASE_B_1"/>
    <property type="match status" value="1"/>
</dbReference>
<dbReference type="PROSITE" id="PS00744">
    <property type="entry name" value="BETA_LACTAMASE_B_2"/>
    <property type="match status" value="1"/>
</dbReference>
<organism>
    <name type="scientific">Bacillus sp. (strain 170)</name>
    <dbReference type="NCBI Taxonomy" id="74566"/>
    <lineage>
        <taxon>Bacteria</taxon>
        <taxon>Bacillati</taxon>
        <taxon>Bacillota</taxon>
        <taxon>Bacilli</taxon>
        <taxon>Bacillales</taxon>
        <taxon>Bacillaceae</taxon>
        <taxon>Bacillus</taxon>
    </lineage>
</organism>
<sequence length="257" mass="28153">MKKNTLLKVGLCVSLLGTTQFVSTISSVQASQKVEQIVIKNETGTISISQLNKNVWVHTELGYFNGEAVPSNGLVLNTSKGLVLVDSSWDNKLTKELIEMVEKKFQKRVTDVIITHAHADRIGGITALKERGIKAHSTALTAELAKKSGYEEPLGDLQTVTNLKFGNTKVETFYPGKGHTEDNIVVWLPQYQILAGGCLVKSAEAKNLGNVADAYVNEWSTSIENMLKRYRNINLVVPGHGKVGDKGLLLHTLDLLK</sequence>
<reference key="1">
    <citation type="journal article" date="1985" name="J. Gen. Microbiol.">
        <title>Nucleotide sequence of the beta-lactamase gene of alkalophilic Bacillus sp. strain 170.</title>
        <authorList>
            <person name="Kato C."/>
            <person name="Kudo T."/>
            <person name="Watanabe K."/>
            <person name="Horikoshi K."/>
        </authorList>
    </citation>
    <scope>NUCLEOTIDE SEQUENCE [GENOMIC DNA]</scope>
    <scope>PROTEIN SEQUENCE OF 31-48</scope>
</reference>
<name>BLA2_BAC17</name>
<comment type="function">
    <text evidence="1">Confers resistance to the different beta-lactams antibiotics (penicillin, cephalosporin and carbapenem) via the hydrolysis of the beta-lactam ring.</text>
</comment>
<comment type="catalytic activity">
    <reaction evidence="2">
        <text>a beta-lactam + H2O = a substituted beta-amino acid</text>
        <dbReference type="Rhea" id="RHEA:20401"/>
        <dbReference type="ChEBI" id="CHEBI:15377"/>
        <dbReference type="ChEBI" id="CHEBI:35627"/>
        <dbReference type="ChEBI" id="CHEBI:140347"/>
        <dbReference type="EC" id="3.5.2.6"/>
    </reaction>
</comment>
<comment type="cofactor">
    <cofactor evidence="1">
        <name>Zn(2+)</name>
        <dbReference type="ChEBI" id="CHEBI:29105"/>
    </cofactor>
    <text evidence="1">Binds 2 Zn(2+) ions per subunit.</text>
</comment>
<comment type="subunit">
    <text evidence="1">Monomer.</text>
</comment>
<comment type="subcellular location">
    <subcellularLocation>
        <location evidence="5">Periplasm</location>
    </subcellularLocation>
</comment>
<comment type="similarity">
    <text evidence="5">Belongs to the metallo-beta-lactamase superfamily. Class-B beta-lactamase family.</text>
</comment>
<feature type="signal peptide" evidence="3">
    <location>
        <begin position="1"/>
        <end position="30"/>
    </location>
</feature>
<feature type="chain" id="PRO_0000016944" description="Metallo-beta-lactamase type 2">
    <location>
        <begin position="31"/>
        <end position="257"/>
    </location>
</feature>
<feature type="binding site" evidence="1">
    <location>
        <position position="116"/>
    </location>
    <ligand>
        <name>Zn(2+)</name>
        <dbReference type="ChEBI" id="CHEBI:29105"/>
        <label>1</label>
    </ligand>
</feature>
<feature type="binding site" evidence="1">
    <location>
        <position position="118"/>
    </location>
    <ligand>
        <name>Zn(2+)</name>
        <dbReference type="ChEBI" id="CHEBI:29105"/>
        <label>1</label>
    </ligand>
</feature>
<feature type="binding site" evidence="1">
    <location>
        <position position="120"/>
    </location>
    <ligand>
        <name>Zn(2+)</name>
        <dbReference type="ChEBI" id="CHEBI:29105"/>
        <label>2</label>
    </ligand>
</feature>
<feature type="binding site" evidence="1">
    <location>
        <position position="179"/>
    </location>
    <ligand>
        <name>Zn(2+)</name>
        <dbReference type="ChEBI" id="CHEBI:29105"/>
        <label>1</label>
    </ligand>
</feature>
<feature type="binding site" evidence="1">
    <location>
        <position position="198"/>
    </location>
    <ligand>
        <name>Zn(2+)</name>
        <dbReference type="ChEBI" id="CHEBI:29105"/>
        <label>2</label>
    </ligand>
</feature>
<feature type="binding site" evidence="1">
    <location>
        <position position="201"/>
    </location>
    <ligand>
        <name>substrate</name>
    </ligand>
</feature>
<feature type="binding site" evidence="2">
    <location>
        <position position="210"/>
    </location>
    <ligand>
        <name>substrate</name>
    </ligand>
</feature>
<feature type="binding site" evidence="1">
    <location>
        <position position="240"/>
    </location>
    <ligand>
        <name>Zn(2+)</name>
        <dbReference type="ChEBI" id="CHEBI:29105"/>
        <label>2</label>
    </ligand>
</feature>
<evidence type="ECO:0000250" key="1">
    <source>
        <dbReference type="UniProtKB" id="P04190"/>
    </source>
</evidence>
<evidence type="ECO:0000250" key="2">
    <source>
        <dbReference type="UniProtKB" id="P25910"/>
    </source>
</evidence>
<evidence type="ECO:0000269" key="3">
    <source>
    </source>
</evidence>
<evidence type="ECO:0000303" key="4">
    <source>
    </source>
</evidence>
<evidence type="ECO:0000305" key="5"/>
<accession>P10425</accession>
<proteinExistence type="evidence at protein level"/>
<keyword id="KW-0046">Antibiotic resistance</keyword>
<keyword id="KW-0903">Direct protein sequencing</keyword>
<keyword id="KW-0378">Hydrolase</keyword>
<keyword id="KW-0479">Metal-binding</keyword>
<keyword id="KW-0574">Periplasm</keyword>
<keyword id="KW-0732">Signal</keyword>
<keyword id="KW-0862">Zinc</keyword>